<reference key="1">
    <citation type="journal article" date="2004" name="Nat. Biotechnol.">
        <title>The genome sequence of the capnophilic rumen bacterium Mannheimia succiniciproducens.</title>
        <authorList>
            <person name="Hong S.H."/>
            <person name="Kim J.S."/>
            <person name="Lee S.Y."/>
            <person name="In Y.H."/>
            <person name="Choi S.S."/>
            <person name="Rih J.-K."/>
            <person name="Kim C.H."/>
            <person name="Jeong H."/>
            <person name="Hur C.G."/>
            <person name="Kim J.J."/>
        </authorList>
    </citation>
    <scope>NUCLEOTIDE SEQUENCE [LARGE SCALE GENOMIC DNA]</scope>
    <source>
        <strain>KCTC 0769BP / MBEL55E</strain>
    </source>
</reference>
<gene>
    <name evidence="1" type="primary">aroK</name>
    <name type="ordered locus">MS1969</name>
</gene>
<protein>
    <recommendedName>
        <fullName evidence="1">Shikimate kinase</fullName>
        <shortName evidence="1">SK</shortName>
        <ecNumber evidence="1">2.7.1.71</ecNumber>
    </recommendedName>
</protein>
<keyword id="KW-0028">Amino-acid biosynthesis</keyword>
<keyword id="KW-0057">Aromatic amino acid biosynthesis</keyword>
<keyword id="KW-0067">ATP-binding</keyword>
<keyword id="KW-0963">Cytoplasm</keyword>
<keyword id="KW-0418">Kinase</keyword>
<keyword id="KW-0460">Magnesium</keyword>
<keyword id="KW-0479">Metal-binding</keyword>
<keyword id="KW-0547">Nucleotide-binding</keyword>
<keyword id="KW-0808">Transferase</keyword>
<organism>
    <name type="scientific">Mannheimia succiniciproducens (strain KCTC 0769BP / MBEL55E)</name>
    <dbReference type="NCBI Taxonomy" id="221988"/>
    <lineage>
        <taxon>Bacteria</taxon>
        <taxon>Pseudomonadati</taxon>
        <taxon>Pseudomonadota</taxon>
        <taxon>Gammaproteobacteria</taxon>
        <taxon>Pasteurellales</taxon>
        <taxon>Pasteurellaceae</taxon>
        <taxon>Basfia</taxon>
    </lineage>
</organism>
<feature type="chain" id="PRO_0000237893" description="Shikimate kinase">
    <location>
        <begin position="1"/>
        <end position="175"/>
    </location>
</feature>
<feature type="binding site" evidence="1">
    <location>
        <begin position="14"/>
        <end position="19"/>
    </location>
    <ligand>
        <name>ATP</name>
        <dbReference type="ChEBI" id="CHEBI:30616"/>
    </ligand>
</feature>
<feature type="binding site" evidence="1">
    <location>
        <position position="18"/>
    </location>
    <ligand>
        <name>Mg(2+)</name>
        <dbReference type="ChEBI" id="CHEBI:18420"/>
    </ligand>
</feature>
<feature type="binding site" evidence="1">
    <location>
        <position position="36"/>
    </location>
    <ligand>
        <name>substrate</name>
    </ligand>
</feature>
<feature type="binding site" evidence="1">
    <location>
        <position position="60"/>
    </location>
    <ligand>
        <name>substrate</name>
    </ligand>
</feature>
<feature type="binding site" evidence="1">
    <location>
        <position position="82"/>
    </location>
    <ligand>
        <name>substrate</name>
    </ligand>
</feature>
<feature type="binding site" evidence="1">
    <location>
        <position position="120"/>
    </location>
    <ligand>
        <name>ATP</name>
        <dbReference type="ChEBI" id="CHEBI:30616"/>
    </ligand>
</feature>
<feature type="binding site" evidence="1">
    <location>
        <position position="140"/>
    </location>
    <ligand>
        <name>substrate</name>
    </ligand>
</feature>
<feature type="binding site" evidence="1">
    <location>
        <position position="157"/>
    </location>
    <ligand>
        <name>ATP</name>
        <dbReference type="ChEBI" id="CHEBI:30616"/>
    </ligand>
</feature>
<evidence type="ECO:0000255" key="1">
    <source>
        <dbReference type="HAMAP-Rule" id="MF_00109"/>
    </source>
</evidence>
<evidence type="ECO:0000305" key="2"/>
<name>AROK_MANSM</name>
<accession>Q65R34</accession>
<dbReference type="EC" id="2.7.1.71" evidence="1"/>
<dbReference type="EMBL" id="AE016827">
    <property type="protein sequence ID" value="AAU38576.1"/>
    <property type="status" value="ALT_INIT"/>
    <property type="molecule type" value="Genomic_DNA"/>
</dbReference>
<dbReference type="RefSeq" id="WP_011201127.1">
    <property type="nucleotide sequence ID" value="NC_006300.1"/>
</dbReference>
<dbReference type="SMR" id="Q65R34"/>
<dbReference type="STRING" id="221988.MS1969"/>
<dbReference type="KEGG" id="msu:MS1969"/>
<dbReference type="eggNOG" id="COG0703">
    <property type="taxonomic scope" value="Bacteria"/>
</dbReference>
<dbReference type="HOGENOM" id="CLU_057607_2_2_6"/>
<dbReference type="OrthoDB" id="9800332at2"/>
<dbReference type="UniPathway" id="UPA00053">
    <property type="reaction ID" value="UER00088"/>
</dbReference>
<dbReference type="Proteomes" id="UP000000607">
    <property type="component" value="Chromosome"/>
</dbReference>
<dbReference type="GO" id="GO:0005829">
    <property type="term" value="C:cytosol"/>
    <property type="evidence" value="ECO:0007669"/>
    <property type="project" value="TreeGrafter"/>
</dbReference>
<dbReference type="GO" id="GO:0005524">
    <property type="term" value="F:ATP binding"/>
    <property type="evidence" value="ECO:0007669"/>
    <property type="project" value="UniProtKB-UniRule"/>
</dbReference>
<dbReference type="GO" id="GO:0000287">
    <property type="term" value="F:magnesium ion binding"/>
    <property type="evidence" value="ECO:0007669"/>
    <property type="project" value="UniProtKB-UniRule"/>
</dbReference>
<dbReference type="GO" id="GO:0004765">
    <property type="term" value="F:shikimate kinase activity"/>
    <property type="evidence" value="ECO:0007669"/>
    <property type="project" value="UniProtKB-UniRule"/>
</dbReference>
<dbReference type="GO" id="GO:0008652">
    <property type="term" value="P:amino acid biosynthetic process"/>
    <property type="evidence" value="ECO:0007669"/>
    <property type="project" value="UniProtKB-KW"/>
</dbReference>
<dbReference type="GO" id="GO:0009073">
    <property type="term" value="P:aromatic amino acid family biosynthetic process"/>
    <property type="evidence" value="ECO:0007669"/>
    <property type="project" value="UniProtKB-KW"/>
</dbReference>
<dbReference type="GO" id="GO:0009423">
    <property type="term" value="P:chorismate biosynthetic process"/>
    <property type="evidence" value="ECO:0007669"/>
    <property type="project" value="UniProtKB-UniRule"/>
</dbReference>
<dbReference type="CDD" id="cd00464">
    <property type="entry name" value="SK"/>
    <property type="match status" value="1"/>
</dbReference>
<dbReference type="FunFam" id="3.40.50.300:FF:000099">
    <property type="entry name" value="Shikimate kinase 1"/>
    <property type="match status" value="1"/>
</dbReference>
<dbReference type="Gene3D" id="3.40.50.300">
    <property type="entry name" value="P-loop containing nucleotide triphosphate hydrolases"/>
    <property type="match status" value="1"/>
</dbReference>
<dbReference type="HAMAP" id="MF_00109">
    <property type="entry name" value="Shikimate_kinase"/>
    <property type="match status" value="1"/>
</dbReference>
<dbReference type="InterPro" id="IPR027417">
    <property type="entry name" value="P-loop_NTPase"/>
</dbReference>
<dbReference type="InterPro" id="IPR031322">
    <property type="entry name" value="Shikimate/glucono_kinase"/>
</dbReference>
<dbReference type="InterPro" id="IPR000623">
    <property type="entry name" value="Shikimate_kinase/TSH1"/>
</dbReference>
<dbReference type="InterPro" id="IPR023000">
    <property type="entry name" value="Shikimate_kinase_CS"/>
</dbReference>
<dbReference type="NCBIfam" id="NF003456">
    <property type="entry name" value="PRK05057.1"/>
    <property type="match status" value="1"/>
</dbReference>
<dbReference type="PANTHER" id="PTHR21087">
    <property type="entry name" value="SHIKIMATE KINASE"/>
    <property type="match status" value="1"/>
</dbReference>
<dbReference type="PANTHER" id="PTHR21087:SF16">
    <property type="entry name" value="SHIKIMATE KINASE 1, CHLOROPLASTIC"/>
    <property type="match status" value="1"/>
</dbReference>
<dbReference type="Pfam" id="PF01202">
    <property type="entry name" value="SKI"/>
    <property type="match status" value="1"/>
</dbReference>
<dbReference type="PRINTS" id="PR01100">
    <property type="entry name" value="SHIKIMTKNASE"/>
</dbReference>
<dbReference type="SUPFAM" id="SSF52540">
    <property type="entry name" value="P-loop containing nucleoside triphosphate hydrolases"/>
    <property type="match status" value="1"/>
</dbReference>
<dbReference type="PROSITE" id="PS01128">
    <property type="entry name" value="SHIKIMATE_KINASE"/>
    <property type="match status" value="1"/>
</dbReference>
<proteinExistence type="inferred from homology"/>
<sequence>MAEKRNIFLVGPMGAGKSTIGRQLAQLLNMEFIDSDNEIEQRAGADISWIFDIEGEDGFRKREERIINELTQKQGIVLSTGGGAILSKETRNHLSARGIVIYLQTTVDKQFERTQRDKKRPLLQGVEDVRKVLEDLAQVRNPLYEEVADITLPTDEQSAKLMASHIVELIDNFNS</sequence>
<comment type="function">
    <text evidence="1">Catalyzes the specific phosphorylation of the 3-hydroxyl group of shikimic acid using ATP as a cosubstrate.</text>
</comment>
<comment type="catalytic activity">
    <reaction evidence="1">
        <text>shikimate + ATP = 3-phosphoshikimate + ADP + H(+)</text>
        <dbReference type="Rhea" id="RHEA:13121"/>
        <dbReference type="ChEBI" id="CHEBI:15378"/>
        <dbReference type="ChEBI" id="CHEBI:30616"/>
        <dbReference type="ChEBI" id="CHEBI:36208"/>
        <dbReference type="ChEBI" id="CHEBI:145989"/>
        <dbReference type="ChEBI" id="CHEBI:456216"/>
        <dbReference type="EC" id="2.7.1.71"/>
    </reaction>
</comment>
<comment type="cofactor">
    <cofactor evidence="1">
        <name>Mg(2+)</name>
        <dbReference type="ChEBI" id="CHEBI:18420"/>
    </cofactor>
    <text evidence="1">Binds 1 Mg(2+) ion per subunit.</text>
</comment>
<comment type="pathway">
    <text evidence="1">Metabolic intermediate biosynthesis; chorismate biosynthesis; chorismate from D-erythrose 4-phosphate and phosphoenolpyruvate: step 5/7.</text>
</comment>
<comment type="subunit">
    <text evidence="1">Monomer.</text>
</comment>
<comment type="subcellular location">
    <subcellularLocation>
        <location evidence="1">Cytoplasm</location>
    </subcellularLocation>
</comment>
<comment type="similarity">
    <text evidence="1">Belongs to the shikimate kinase family.</text>
</comment>
<comment type="sequence caution" evidence="2">
    <conflict type="erroneous initiation">
        <sequence resource="EMBL-CDS" id="AAU38576"/>
    </conflict>
</comment>